<organism>
    <name type="scientific">Mycobacterium sp. (strain MCS)</name>
    <dbReference type="NCBI Taxonomy" id="164756"/>
    <lineage>
        <taxon>Bacteria</taxon>
        <taxon>Bacillati</taxon>
        <taxon>Actinomycetota</taxon>
        <taxon>Actinomycetes</taxon>
        <taxon>Mycobacteriales</taxon>
        <taxon>Mycobacteriaceae</taxon>
        <taxon>Mycobacterium</taxon>
    </lineage>
</organism>
<gene>
    <name evidence="1" type="primary">gmk</name>
    <name type="ordered locus">Mmcs_2370</name>
</gene>
<proteinExistence type="inferred from homology"/>
<name>KGUA_MYCSS</name>
<sequence>MNTGRGVGRVVVLSGPSAVGKSTVVRCLRERIPDLYFSVSATTRAPRPGEVDGVDYSFVTPEAFQQLIDDGALLEWAEIHGGLHRSGTPARPVREATVAGRPVLIEVDLAGARAVKQAMPEALSVFLAPPSWEVLERRLVGRGTETPDVMSRRLDTARTELAAQSDFDVVVVNSQLESACSELVSLLVGHTSAGTNPA</sequence>
<dbReference type="EC" id="2.7.4.8" evidence="1"/>
<dbReference type="EMBL" id="CP000384">
    <property type="protein sequence ID" value="ABG08478.1"/>
    <property type="molecule type" value="Genomic_DNA"/>
</dbReference>
<dbReference type="SMR" id="Q1B9F6"/>
<dbReference type="KEGG" id="mmc:Mmcs_2370"/>
<dbReference type="HOGENOM" id="CLU_001715_1_1_11"/>
<dbReference type="BioCyc" id="MSP164756:G1G6O-2422-MONOMER"/>
<dbReference type="GO" id="GO:0005829">
    <property type="term" value="C:cytosol"/>
    <property type="evidence" value="ECO:0007669"/>
    <property type="project" value="TreeGrafter"/>
</dbReference>
<dbReference type="GO" id="GO:0005524">
    <property type="term" value="F:ATP binding"/>
    <property type="evidence" value="ECO:0007669"/>
    <property type="project" value="UniProtKB-UniRule"/>
</dbReference>
<dbReference type="GO" id="GO:0004385">
    <property type="term" value="F:guanylate kinase activity"/>
    <property type="evidence" value="ECO:0007669"/>
    <property type="project" value="UniProtKB-UniRule"/>
</dbReference>
<dbReference type="CDD" id="cd00071">
    <property type="entry name" value="GMPK"/>
    <property type="match status" value="1"/>
</dbReference>
<dbReference type="FunFam" id="3.30.63.10:FF:000002">
    <property type="entry name" value="Guanylate kinase 1"/>
    <property type="match status" value="1"/>
</dbReference>
<dbReference type="Gene3D" id="3.30.63.10">
    <property type="entry name" value="Guanylate Kinase phosphate binding domain"/>
    <property type="match status" value="1"/>
</dbReference>
<dbReference type="Gene3D" id="3.40.50.300">
    <property type="entry name" value="P-loop containing nucleotide triphosphate hydrolases"/>
    <property type="match status" value="1"/>
</dbReference>
<dbReference type="HAMAP" id="MF_00328">
    <property type="entry name" value="Guanylate_kinase"/>
    <property type="match status" value="1"/>
</dbReference>
<dbReference type="InterPro" id="IPR008145">
    <property type="entry name" value="GK/Ca_channel_bsu"/>
</dbReference>
<dbReference type="InterPro" id="IPR008144">
    <property type="entry name" value="Guanylate_kin-like_dom"/>
</dbReference>
<dbReference type="InterPro" id="IPR017665">
    <property type="entry name" value="Guanylate_kinase"/>
</dbReference>
<dbReference type="InterPro" id="IPR020590">
    <property type="entry name" value="Guanylate_kinase_CS"/>
</dbReference>
<dbReference type="InterPro" id="IPR027417">
    <property type="entry name" value="P-loop_NTPase"/>
</dbReference>
<dbReference type="NCBIfam" id="TIGR03263">
    <property type="entry name" value="guanyl_kin"/>
    <property type="match status" value="1"/>
</dbReference>
<dbReference type="PANTHER" id="PTHR23117:SF13">
    <property type="entry name" value="GUANYLATE KINASE"/>
    <property type="match status" value="1"/>
</dbReference>
<dbReference type="PANTHER" id="PTHR23117">
    <property type="entry name" value="GUANYLATE KINASE-RELATED"/>
    <property type="match status" value="1"/>
</dbReference>
<dbReference type="Pfam" id="PF00625">
    <property type="entry name" value="Guanylate_kin"/>
    <property type="match status" value="1"/>
</dbReference>
<dbReference type="SMART" id="SM00072">
    <property type="entry name" value="GuKc"/>
    <property type="match status" value="1"/>
</dbReference>
<dbReference type="SUPFAM" id="SSF52540">
    <property type="entry name" value="P-loop containing nucleoside triphosphate hydrolases"/>
    <property type="match status" value="1"/>
</dbReference>
<dbReference type="PROSITE" id="PS00856">
    <property type="entry name" value="GUANYLATE_KINASE_1"/>
    <property type="match status" value="1"/>
</dbReference>
<dbReference type="PROSITE" id="PS50052">
    <property type="entry name" value="GUANYLATE_KINASE_2"/>
    <property type="match status" value="1"/>
</dbReference>
<evidence type="ECO:0000255" key="1">
    <source>
        <dbReference type="HAMAP-Rule" id="MF_00328"/>
    </source>
</evidence>
<protein>
    <recommendedName>
        <fullName evidence="1">Guanylate kinase</fullName>
        <ecNumber evidence="1">2.7.4.8</ecNumber>
    </recommendedName>
    <alternativeName>
        <fullName evidence="1">GMP kinase</fullName>
    </alternativeName>
</protein>
<comment type="function">
    <text evidence="1">Essential for recycling GMP and indirectly, cGMP.</text>
</comment>
<comment type="catalytic activity">
    <reaction evidence="1">
        <text>GMP + ATP = GDP + ADP</text>
        <dbReference type="Rhea" id="RHEA:20780"/>
        <dbReference type="ChEBI" id="CHEBI:30616"/>
        <dbReference type="ChEBI" id="CHEBI:58115"/>
        <dbReference type="ChEBI" id="CHEBI:58189"/>
        <dbReference type="ChEBI" id="CHEBI:456216"/>
        <dbReference type="EC" id="2.7.4.8"/>
    </reaction>
</comment>
<comment type="subcellular location">
    <subcellularLocation>
        <location evidence="1">Cytoplasm</location>
    </subcellularLocation>
</comment>
<comment type="similarity">
    <text evidence="1">Belongs to the guanylate kinase family.</text>
</comment>
<accession>Q1B9F6</accession>
<feature type="chain" id="PRO_0000266349" description="Guanylate kinase">
    <location>
        <begin position="1"/>
        <end position="198"/>
    </location>
</feature>
<feature type="domain" description="Guanylate kinase-like" evidence="1">
    <location>
        <begin position="8"/>
        <end position="188"/>
    </location>
</feature>
<feature type="binding site" evidence="1">
    <location>
        <begin position="15"/>
        <end position="22"/>
    </location>
    <ligand>
        <name>ATP</name>
        <dbReference type="ChEBI" id="CHEBI:30616"/>
    </ligand>
</feature>
<reference key="1">
    <citation type="submission" date="2006-06" db="EMBL/GenBank/DDBJ databases">
        <title>Complete sequence of chromosome of Mycobacterium sp. MCS.</title>
        <authorList>
            <consortium name="US DOE Joint Genome Institute"/>
            <person name="Copeland A."/>
            <person name="Lucas S."/>
            <person name="Lapidus A."/>
            <person name="Barry K."/>
            <person name="Detter J.C."/>
            <person name="Glavina del Rio T."/>
            <person name="Hammon N."/>
            <person name="Israni S."/>
            <person name="Dalin E."/>
            <person name="Tice H."/>
            <person name="Pitluck S."/>
            <person name="Martinez M."/>
            <person name="Schmutz J."/>
            <person name="Larimer F."/>
            <person name="Land M."/>
            <person name="Hauser L."/>
            <person name="Kyrpides N."/>
            <person name="Kim E."/>
            <person name="Miller C.D."/>
            <person name="Hughes J.E."/>
            <person name="Anderson A.J."/>
            <person name="Sims R.C."/>
            <person name="Richardson P."/>
        </authorList>
    </citation>
    <scope>NUCLEOTIDE SEQUENCE [LARGE SCALE GENOMIC DNA]</scope>
    <source>
        <strain>MCS</strain>
    </source>
</reference>
<keyword id="KW-0067">ATP-binding</keyword>
<keyword id="KW-0963">Cytoplasm</keyword>
<keyword id="KW-0418">Kinase</keyword>
<keyword id="KW-0547">Nucleotide-binding</keyword>
<keyword id="KW-0808">Transferase</keyword>